<protein>
    <recommendedName>
        <fullName>Receptor-type tyrosine-protein phosphatase alpha</fullName>
        <shortName>Protein-tyrosine phosphatase alpha</shortName>
        <shortName>R-PTP-alpha</shortName>
        <ecNumber>3.1.3.48</ecNumber>
    </recommendedName>
</protein>
<sequence length="802" mass="90719">MDSWFILVLLGSGLICVSANNATTVAPSVGITRLINSSTAEPVKEEAKTSNPTSSLTSLSVAPTFSPNITLGPTYLTTVNSSDSDNGTTRTASTNSIGITISPNGTWLPDNQFTDARTEPWEGNSSTAATTPETFPPSGNSDSKDRRDETPIIAVMVALSSLLVIVFIIIVLYMLRFKKYKQAGSHSNSFRLSNGRTEDVEPQSVPLLARSPSTNRKYPPLPVDKLEEEINRRMADDNKLFREEFNALPACPIQATCEAASKEENKEKNRYVNILPYDHSRVHLTPVEGVPDSDYINASFINGYQEKNKFIAAQGPKEETVNDFWRMIWEQNTATIVMVTNLKERKECKCAQYWPDQGCWTYGNIRVSVEDVTVLVDYTVRKFCIQQVGDMTNRKPQRLITQFHFTSWPDFGVPFTPIGMLKFLKKVKACNPQYAGAIVVHCSAGVGRTGTFVVIDAMLDMMHTERKVDVYGFVSRIRAQRCQMVQTDMQYVFIYQALLEHYLYGDTELEVTSLETHLQKIYNKIPGTSNNGLEEEFKKLTSIKIQNDKMRTGNLPANMKKNRVLQIIPYEFNRVIIPVKRGEENTDYVNASFIDGYRQKDSYIASQGPLLHTIEDFWRMIWEWKSCSIVMLTELEERGQEKCAQYWPSDGLVSYGDITVELKKEEECESYTVRDLLVTNTRENKSRQIRQFHFHGWPEVGIPSDGKGMISIIAAVQKQQQQSGNHPITVHCSAGAGRTGTFCALSTVLERVKAEGILDVFQTVKSLRLQRPHMVQTLEQYEFCYKVVQEYIDAFSDYANFK</sequence>
<reference key="1">
    <citation type="journal article" date="1990" name="Proc. Natl. Acad. Sci. U.S.A.">
        <title>Cloning of three human tyrosine phosphatases reveals a multigene family of receptor-linked protein-tyrosine-phosphatases expressed in brain.</title>
        <authorList>
            <person name="Kaplan R."/>
            <person name="Morse B."/>
            <person name="Huebner K."/>
            <person name="Croce C."/>
            <person name="Howk R."/>
            <person name="Ravera M."/>
            <person name="Ricca G."/>
            <person name="Jaye M."/>
            <person name="Schlessinger J."/>
        </authorList>
    </citation>
    <scope>NUCLEOTIDE SEQUENCE [MRNA] (ISOFORM 1)</scope>
</reference>
<reference key="2">
    <citation type="journal article" date="1990" name="EMBO J.">
        <title>Structural diversity and evolution of human receptor-like protein tyrosine phosphatases.</title>
        <authorList>
            <person name="Krueger N.X."/>
            <person name="Streuli M."/>
            <person name="Saito H."/>
        </authorList>
    </citation>
    <scope>NUCLEOTIDE SEQUENCE [MRNA] (ISOFORM 2)</scope>
</reference>
<reference key="3">
    <citation type="journal article" date="1990" name="Nucleic Acids Res.">
        <title>Sequence of a cDNA encoding human LRP (leukocyte common antigen-related peptide).</title>
        <authorList>
            <person name="Ohagi S."/>
            <person name="Nishi M."/>
            <person name="Steiner D.F."/>
        </authorList>
    </citation>
    <scope>NUCLEOTIDE SEQUENCE [MRNA] (ISOFORM 2)</scope>
    <source>
        <tissue>Kidney</tissue>
    </source>
</reference>
<reference key="4">
    <citation type="journal article" date="1990" name="FEBS Lett.">
        <title>Cloning and chromosomal assignment of a widely expressed human receptor-like protein-tyrosine phosphatase.</title>
        <authorList>
            <person name="Jirik F.R."/>
            <person name="Janzen N.M."/>
            <person name="Melhado I.G."/>
            <person name="Harder K.W."/>
        </authorList>
    </citation>
    <scope>NUCLEOTIDE SEQUENCE [MRNA] (ISOFORM 2)</scope>
</reference>
<reference key="5">
    <citation type="journal article" date="2004" name="Nat. Genet.">
        <title>Complete sequencing and characterization of 21,243 full-length human cDNAs.</title>
        <authorList>
            <person name="Ota T."/>
            <person name="Suzuki Y."/>
            <person name="Nishikawa T."/>
            <person name="Otsuki T."/>
            <person name="Sugiyama T."/>
            <person name="Irie R."/>
            <person name="Wakamatsu A."/>
            <person name="Hayashi K."/>
            <person name="Sato H."/>
            <person name="Nagai K."/>
            <person name="Kimura K."/>
            <person name="Makita H."/>
            <person name="Sekine M."/>
            <person name="Obayashi M."/>
            <person name="Nishi T."/>
            <person name="Shibahara T."/>
            <person name="Tanaka T."/>
            <person name="Ishii S."/>
            <person name="Yamamoto J."/>
            <person name="Saito K."/>
            <person name="Kawai Y."/>
            <person name="Isono Y."/>
            <person name="Nakamura Y."/>
            <person name="Nagahari K."/>
            <person name="Murakami K."/>
            <person name="Yasuda T."/>
            <person name="Iwayanagi T."/>
            <person name="Wagatsuma M."/>
            <person name="Shiratori A."/>
            <person name="Sudo H."/>
            <person name="Hosoiri T."/>
            <person name="Kaku Y."/>
            <person name="Kodaira H."/>
            <person name="Kondo H."/>
            <person name="Sugawara M."/>
            <person name="Takahashi M."/>
            <person name="Kanda K."/>
            <person name="Yokoi T."/>
            <person name="Furuya T."/>
            <person name="Kikkawa E."/>
            <person name="Omura Y."/>
            <person name="Abe K."/>
            <person name="Kamihara K."/>
            <person name="Katsuta N."/>
            <person name="Sato K."/>
            <person name="Tanikawa M."/>
            <person name="Yamazaki M."/>
            <person name="Ninomiya K."/>
            <person name="Ishibashi T."/>
            <person name="Yamashita H."/>
            <person name="Murakawa K."/>
            <person name="Fujimori K."/>
            <person name="Tanai H."/>
            <person name="Kimata M."/>
            <person name="Watanabe M."/>
            <person name="Hiraoka S."/>
            <person name="Chiba Y."/>
            <person name="Ishida S."/>
            <person name="Ono Y."/>
            <person name="Takiguchi S."/>
            <person name="Watanabe S."/>
            <person name="Yosida M."/>
            <person name="Hotuta T."/>
            <person name="Kusano J."/>
            <person name="Kanehori K."/>
            <person name="Takahashi-Fujii A."/>
            <person name="Hara H."/>
            <person name="Tanase T.-O."/>
            <person name="Nomura Y."/>
            <person name="Togiya S."/>
            <person name="Komai F."/>
            <person name="Hara R."/>
            <person name="Takeuchi K."/>
            <person name="Arita M."/>
            <person name="Imose N."/>
            <person name="Musashino K."/>
            <person name="Yuuki H."/>
            <person name="Oshima A."/>
            <person name="Sasaki N."/>
            <person name="Aotsuka S."/>
            <person name="Yoshikawa Y."/>
            <person name="Matsunawa H."/>
            <person name="Ichihara T."/>
            <person name="Shiohata N."/>
            <person name="Sano S."/>
            <person name="Moriya S."/>
            <person name="Momiyama H."/>
            <person name="Satoh N."/>
            <person name="Takami S."/>
            <person name="Terashima Y."/>
            <person name="Suzuki O."/>
            <person name="Nakagawa S."/>
            <person name="Senoh A."/>
            <person name="Mizoguchi H."/>
            <person name="Goto Y."/>
            <person name="Shimizu F."/>
            <person name="Wakebe H."/>
            <person name="Hishigaki H."/>
            <person name="Watanabe T."/>
            <person name="Sugiyama A."/>
            <person name="Takemoto M."/>
            <person name="Kawakami B."/>
            <person name="Yamazaki M."/>
            <person name="Watanabe K."/>
            <person name="Kumagai A."/>
            <person name="Itakura S."/>
            <person name="Fukuzumi Y."/>
            <person name="Fujimori Y."/>
            <person name="Komiyama M."/>
            <person name="Tashiro H."/>
            <person name="Tanigami A."/>
            <person name="Fujiwara T."/>
            <person name="Ono T."/>
            <person name="Yamada K."/>
            <person name="Fujii Y."/>
            <person name="Ozaki K."/>
            <person name="Hirao M."/>
            <person name="Ohmori Y."/>
            <person name="Kawabata A."/>
            <person name="Hikiji T."/>
            <person name="Kobatake N."/>
            <person name="Inagaki H."/>
            <person name="Ikema Y."/>
            <person name="Okamoto S."/>
            <person name="Okitani R."/>
            <person name="Kawakami T."/>
            <person name="Noguchi S."/>
            <person name="Itoh T."/>
            <person name="Shigeta K."/>
            <person name="Senba T."/>
            <person name="Matsumura K."/>
            <person name="Nakajima Y."/>
            <person name="Mizuno T."/>
            <person name="Morinaga M."/>
            <person name="Sasaki M."/>
            <person name="Togashi T."/>
            <person name="Oyama M."/>
            <person name="Hata H."/>
            <person name="Watanabe M."/>
            <person name="Komatsu T."/>
            <person name="Mizushima-Sugano J."/>
            <person name="Satoh T."/>
            <person name="Shirai Y."/>
            <person name="Takahashi Y."/>
            <person name="Nakagawa K."/>
            <person name="Okumura K."/>
            <person name="Nagase T."/>
            <person name="Nomura N."/>
            <person name="Kikuchi H."/>
            <person name="Masuho Y."/>
            <person name="Yamashita R."/>
            <person name="Nakai K."/>
            <person name="Yada T."/>
            <person name="Nakamura Y."/>
            <person name="Ohara O."/>
            <person name="Isogai T."/>
            <person name="Sugano S."/>
        </authorList>
    </citation>
    <scope>NUCLEOTIDE SEQUENCE [LARGE SCALE MRNA] (ISOFORM 2)</scope>
    <source>
        <tissue>Thalamus</tissue>
    </source>
</reference>
<reference key="6">
    <citation type="journal article" date="2007" name="BMC Genomics">
        <title>The full-ORF clone resource of the German cDNA consortium.</title>
        <authorList>
            <person name="Bechtel S."/>
            <person name="Rosenfelder H."/>
            <person name="Duda A."/>
            <person name="Schmidt C.P."/>
            <person name="Ernst U."/>
            <person name="Wellenreuther R."/>
            <person name="Mehrle A."/>
            <person name="Schuster C."/>
            <person name="Bahr A."/>
            <person name="Bloecker H."/>
            <person name="Heubner D."/>
            <person name="Hoerlein A."/>
            <person name="Michel G."/>
            <person name="Wedler H."/>
            <person name="Koehrer K."/>
            <person name="Ottenwaelder B."/>
            <person name="Poustka A."/>
            <person name="Wiemann S."/>
            <person name="Schupp I."/>
        </authorList>
    </citation>
    <scope>NUCLEOTIDE SEQUENCE [LARGE SCALE MRNA] (ISOFORM 2)</scope>
    <source>
        <tissue>Lymph node</tissue>
    </source>
</reference>
<reference key="7">
    <citation type="journal article" date="2001" name="Nature">
        <title>The DNA sequence and comparative analysis of human chromosome 20.</title>
        <authorList>
            <person name="Deloukas P."/>
            <person name="Matthews L.H."/>
            <person name="Ashurst J.L."/>
            <person name="Burton J."/>
            <person name="Gilbert J.G.R."/>
            <person name="Jones M."/>
            <person name="Stavrides G."/>
            <person name="Almeida J.P."/>
            <person name="Babbage A.K."/>
            <person name="Bagguley C.L."/>
            <person name="Bailey J."/>
            <person name="Barlow K.F."/>
            <person name="Bates K.N."/>
            <person name="Beard L.M."/>
            <person name="Beare D.M."/>
            <person name="Beasley O.P."/>
            <person name="Bird C.P."/>
            <person name="Blakey S.E."/>
            <person name="Bridgeman A.M."/>
            <person name="Brown A.J."/>
            <person name="Buck D."/>
            <person name="Burrill W.D."/>
            <person name="Butler A.P."/>
            <person name="Carder C."/>
            <person name="Carter N.P."/>
            <person name="Chapman J.C."/>
            <person name="Clamp M."/>
            <person name="Clark G."/>
            <person name="Clark L.N."/>
            <person name="Clark S.Y."/>
            <person name="Clee C.M."/>
            <person name="Clegg S."/>
            <person name="Cobley V.E."/>
            <person name="Collier R.E."/>
            <person name="Connor R.E."/>
            <person name="Corby N.R."/>
            <person name="Coulson A."/>
            <person name="Coville G.J."/>
            <person name="Deadman R."/>
            <person name="Dhami P.D."/>
            <person name="Dunn M."/>
            <person name="Ellington A.G."/>
            <person name="Frankland J.A."/>
            <person name="Fraser A."/>
            <person name="French L."/>
            <person name="Garner P."/>
            <person name="Grafham D.V."/>
            <person name="Griffiths C."/>
            <person name="Griffiths M.N.D."/>
            <person name="Gwilliam R."/>
            <person name="Hall R.E."/>
            <person name="Hammond S."/>
            <person name="Harley J.L."/>
            <person name="Heath P.D."/>
            <person name="Ho S."/>
            <person name="Holden J.L."/>
            <person name="Howden P.J."/>
            <person name="Huckle E."/>
            <person name="Hunt A.R."/>
            <person name="Hunt S.E."/>
            <person name="Jekosch K."/>
            <person name="Johnson C.M."/>
            <person name="Johnson D."/>
            <person name="Kay M.P."/>
            <person name="Kimberley A.M."/>
            <person name="King A."/>
            <person name="Knights A."/>
            <person name="Laird G.K."/>
            <person name="Lawlor S."/>
            <person name="Lehvaeslaiho M.H."/>
            <person name="Leversha M.A."/>
            <person name="Lloyd C."/>
            <person name="Lloyd D.M."/>
            <person name="Lovell J.D."/>
            <person name="Marsh V.L."/>
            <person name="Martin S.L."/>
            <person name="McConnachie L.J."/>
            <person name="McLay K."/>
            <person name="McMurray A.A."/>
            <person name="Milne S.A."/>
            <person name="Mistry D."/>
            <person name="Moore M.J.F."/>
            <person name="Mullikin J.C."/>
            <person name="Nickerson T."/>
            <person name="Oliver K."/>
            <person name="Parker A."/>
            <person name="Patel R."/>
            <person name="Pearce T.A.V."/>
            <person name="Peck A.I."/>
            <person name="Phillimore B.J.C.T."/>
            <person name="Prathalingam S.R."/>
            <person name="Plumb R.W."/>
            <person name="Ramsay H."/>
            <person name="Rice C.M."/>
            <person name="Ross M.T."/>
            <person name="Scott C.E."/>
            <person name="Sehra H.K."/>
            <person name="Shownkeen R."/>
            <person name="Sims S."/>
            <person name="Skuce C.D."/>
            <person name="Smith M.L."/>
            <person name="Soderlund C."/>
            <person name="Steward C.A."/>
            <person name="Sulston J.E."/>
            <person name="Swann R.M."/>
            <person name="Sycamore N."/>
            <person name="Taylor R."/>
            <person name="Tee L."/>
            <person name="Thomas D.W."/>
            <person name="Thorpe A."/>
            <person name="Tracey A."/>
            <person name="Tromans A.C."/>
            <person name="Vaudin M."/>
            <person name="Wall M."/>
            <person name="Wallis J.M."/>
            <person name="Whitehead S.L."/>
            <person name="Whittaker P."/>
            <person name="Willey D.L."/>
            <person name="Williams L."/>
            <person name="Williams S.A."/>
            <person name="Wilming L."/>
            <person name="Wray P.W."/>
            <person name="Hubbard T."/>
            <person name="Durbin R.M."/>
            <person name="Bentley D.R."/>
            <person name="Beck S."/>
            <person name="Rogers J."/>
        </authorList>
    </citation>
    <scope>NUCLEOTIDE SEQUENCE [LARGE SCALE GENOMIC DNA]</scope>
</reference>
<reference key="8">
    <citation type="submission" date="2005-09" db="EMBL/GenBank/DDBJ databases">
        <authorList>
            <person name="Mural R.J."/>
            <person name="Istrail S."/>
            <person name="Sutton G.G."/>
            <person name="Florea L."/>
            <person name="Halpern A.L."/>
            <person name="Mobarry C.M."/>
            <person name="Lippert R."/>
            <person name="Walenz B."/>
            <person name="Shatkay H."/>
            <person name="Dew I."/>
            <person name="Miller J.R."/>
            <person name="Flanigan M.J."/>
            <person name="Edwards N.J."/>
            <person name="Bolanos R."/>
            <person name="Fasulo D."/>
            <person name="Halldorsson B.V."/>
            <person name="Hannenhalli S."/>
            <person name="Turner R."/>
            <person name="Yooseph S."/>
            <person name="Lu F."/>
            <person name="Nusskern D.R."/>
            <person name="Shue B.C."/>
            <person name="Zheng X.H."/>
            <person name="Zhong F."/>
            <person name="Delcher A.L."/>
            <person name="Huson D.H."/>
            <person name="Kravitz S.A."/>
            <person name="Mouchard L."/>
            <person name="Reinert K."/>
            <person name="Remington K.A."/>
            <person name="Clark A.G."/>
            <person name="Waterman M.S."/>
            <person name="Eichler E.E."/>
            <person name="Adams M.D."/>
            <person name="Hunkapiller M.W."/>
            <person name="Myers E.W."/>
            <person name="Venter J.C."/>
        </authorList>
    </citation>
    <scope>NUCLEOTIDE SEQUENCE [LARGE SCALE GENOMIC DNA]</scope>
</reference>
<reference key="9">
    <citation type="journal article" date="2004" name="Genome Res.">
        <title>The status, quality, and expansion of the NIH full-length cDNA project: the Mammalian Gene Collection (MGC).</title>
        <authorList>
            <consortium name="The MGC Project Team"/>
        </authorList>
    </citation>
    <scope>NUCLEOTIDE SEQUENCE [LARGE SCALE MRNA] (ISOFORM 2)</scope>
    <source>
        <tissue>Skin</tissue>
    </source>
</reference>
<reference key="10">
    <citation type="journal article" date="2006" name="Cell">
        <title>Global, in vivo, and site-specific phosphorylation dynamics in signaling networks.</title>
        <authorList>
            <person name="Olsen J.V."/>
            <person name="Blagoev B."/>
            <person name="Gnad F."/>
            <person name="Macek B."/>
            <person name="Kumar C."/>
            <person name="Mortensen P."/>
            <person name="Mann M."/>
        </authorList>
    </citation>
    <scope>IDENTIFICATION BY MASS SPECTROMETRY [LARGE SCALE ANALYSIS]</scope>
    <source>
        <tissue>Cervix carcinoma</tissue>
    </source>
</reference>
<reference key="11">
    <citation type="journal article" date="2009" name="Mol. Cell. Proteomics">
        <title>Large-scale proteomics analysis of the human kinome.</title>
        <authorList>
            <person name="Oppermann F.S."/>
            <person name="Gnad F."/>
            <person name="Olsen J.V."/>
            <person name="Hornberger R."/>
            <person name="Greff Z."/>
            <person name="Keri G."/>
            <person name="Mann M."/>
            <person name="Daub H."/>
        </authorList>
    </citation>
    <scope>IDENTIFICATION BY MASS SPECTROMETRY [LARGE SCALE ANALYSIS]</scope>
</reference>
<reference key="12">
    <citation type="journal article" date="2009" name="Sci. Signal.">
        <title>Quantitative phosphoproteomic analysis of T cell receptor signaling reveals system-wide modulation of protein-protein interactions.</title>
        <authorList>
            <person name="Mayya V."/>
            <person name="Lundgren D.H."/>
            <person name="Hwang S.-I."/>
            <person name="Rezaul K."/>
            <person name="Wu L."/>
            <person name="Eng J.K."/>
            <person name="Rodionov V."/>
            <person name="Han D.K."/>
        </authorList>
    </citation>
    <scope>PHOSPHORYLATION [LARGE SCALE ANALYSIS] AT TYR-798</scope>
    <scope>IDENTIFICATION BY MASS SPECTROMETRY [LARGE SCALE ANALYSIS]</scope>
    <source>
        <tissue>Leukemic T-cell</tissue>
    </source>
</reference>
<reference key="13">
    <citation type="journal article" date="2010" name="Sci. Signal.">
        <title>Quantitative phosphoproteomics reveals widespread full phosphorylation site occupancy during mitosis.</title>
        <authorList>
            <person name="Olsen J.V."/>
            <person name="Vermeulen M."/>
            <person name="Santamaria A."/>
            <person name="Kumar C."/>
            <person name="Miller M.L."/>
            <person name="Jensen L.J."/>
            <person name="Gnad F."/>
            <person name="Cox J."/>
            <person name="Jensen T.S."/>
            <person name="Nigg E.A."/>
            <person name="Brunak S."/>
            <person name="Mann M."/>
        </authorList>
    </citation>
    <scope>PHOSPHORYLATION [LARGE SCALE ANALYSIS] AT TYR-798</scope>
    <scope>IDENTIFICATION BY MASS SPECTROMETRY [LARGE SCALE ANALYSIS]</scope>
    <source>
        <tissue>Cervix carcinoma</tissue>
    </source>
</reference>
<reference key="14">
    <citation type="journal article" date="2011" name="Sci. Signal.">
        <title>System-wide temporal characterization of the proteome and phosphoproteome of human embryonic stem cell differentiation.</title>
        <authorList>
            <person name="Rigbolt K.T."/>
            <person name="Prokhorova T.A."/>
            <person name="Akimov V."/>
            <person name="Henningsen J."/>
            <person name="Johansen P.T."/>
            <person name="Kratchmarova I."/>
            <person name="Kassem M."/>
            <person name="Mann M."/>
            <person name="Olsen J.V."/>
            <person name="Blagoev B."/>
        </authorList>
    </citation>
    <scope>IDENTIFICATION BY MASS SPECTROMETRY [LARGE SCALE ANALYSIS]</scope>
</reference>
<reference key="15">
    <citation type="journal article" date="2012" name="Mol. Cell. Biol.">
        <title>Protein tyrosine phosphatase alpha phosphotyrosyl-789 binds BCAR3 to position Cas for activation at integrin-mediated focal adhesions.</title>
        <authorList>
            <person name="Sun G."/>
            <person name="Cheng S.Y."/>
            <person name="Chen M."/>
            <person name="Lim C.J."/>
            <person name="Pallen C.J."/>
        </authorList>
    </citation>
    <scope>IDENTIFICATION IN A COMPLEX WITH BCAR3; BCAR1 AND SRC</scope>
    <scope>INTERACTION WITH GRB2 AND BCAR3</scope>
    <scope>PHOSPHORYLATION AT TYR-798</scope>
    <scope>MUTAGENESIS OF TYR-798</scope>
</reference>
<reference key="16">
    <citation type="journal article" date="2013" name="J. Proteome Res.">
        <title>Toward a comprehensive characterization of a human cancer cell phosphoproteome.</title>
        <authorList>
            <person name="Zhou H."/>
            <person name="Di Palma S."/>
            <person name="Preisinger C."/>
            <person name="Peng M."/>
            <person name="Polat A.N."/>
            <person name="Heck A.J."/>
            <person name="Mohammed S."/>
        </authorList>
    </citation>
    <scope>PHOSPHORYLATION [LARGE SCALE ANALYSIS] AT TYR-798</scope>
    <scope>IDENTIFICATION BY MASS SPECTROMETRY [LARGE SCALE ANALYSIS]</scope>
    <source>
        <tissue>Erythroleukemia</tissue>
    </source>
</reference>
<reference key="17">
    <citation type="journal article" date="2014" name="J. Proteomics">
        <title>An enzyme assisted RP-RPLC approach for in-depth analysis of human liver phosphoproteome.</title>
        <authorList>
            <person name="Bian Y."/>
            <person name="Song C."/>
            <person name="Cheng K."/>
            <person name="Dong M."/>
            <person name="Wang F."/>
            <person name="Huang J."/>
            <person name="Sun D."/>
            <person name="Wang L."/>
            <person name="Ye M."/>
            <person name="Zou H."/>
        </authorList>
    </citation>
    <scope>PHOSPHORYLATION [LARGE SCALE ANALYSIS] AT TYR-798</scope>
    <scope>IDENTIFICATION BY MASS SPECTROMETRY [LARGE SCALE ANALYSIS]</scope>
    <source>
        <tissue>Liver</tissue>
    </source>
</reference>
<reference key="18">
    <citation type="journal article" date="2015" name="Proteomics">
        <title>N-terminome analysis of the human mitochondrial proteome.</title>
        <authorList>
            <person name="Vaca Jacome A.S."/>
            <person name="Rabilloud T."/>
            <person name="Schaeffer-Reiss C."/>
            <person name="Rompais M."/>
            <person name="Ayoub D."/>
            <person name="Lane L."/>
            <person name="Bairoch A."/>
            <person name="Van Dorsselaer A."/>
            <person name="Carapito C."/>
        </authorList>
    </citation>
    <scope>IDENTIFICATION BY MASS SPECTROMETRY [LARGE SCALE ANALYSIS]</scope>
</reference>
<accession>P18433</accession>
<accession>A8K2G8</accession>
<accession>D3DVX5</accession>
<accession>Q14513</accession>
<accession>Q7Z2I2</accession>
<accession>Q96TD9</accession>
<dbReference type="EC" id="3.1.3.48"/>
<dbReference type="EMBL" id="M34668">
    <property type="protein sequence ID" value="AAA36528.1"/>
    <property type="molecule type" value="mRNA"/>
</dbReference>
<dbReference type="EMBL" id="X54130">
    <property type="protein sequence ID" value="CAA38065.1"/>
    <property type="molecule type" value="mRNA"/>
</dbReference>
<dbReference type="EMBL" id="X54890">
    <property type="protein sequence ID" value="CAA38662.1"/>
    <property type="molecule type" value="mRNA"/>
</dbReference>
<dbReference type="EMBL" id="X53364">
    <property type="protein sequence ID" value="CAA37447.1"/>
    <property type="molecule type" value="mRNA"/>
</dbReference>
<dbReference type="EMBL" id="AK290233">
    <property type="protein sequence ID" value="BAF82922.1"/>
    <property type="molecule type" value="mRNA"/>
</dbReference>
<dbReference type="EMBL" id="BX571753">
    <property type="protein sequence ID" value="CAE11878.1"/>
    <property type="molecule type" value="mRNA"/>
</dbReference>
<dbReference type="EMBL" id="AL121905">
    <property type="status" value="NOT_ANNOTATED_CDS"/>
    <property type="molecule type" value="Genomic_DNA"/>
</dbReference>
<dbReference type="EMBL" id="CH471133">
    <property type="protein sequence ID" value="EAX10562.1"/>
    <property type="molecule type" value="Genomic_DNA"/>
</dbReference>
<dbReference type="EMBL" id="CH471133">
    <property type="protein sequence ID" value="EAX10563.1"/>
    <property type="molecule type" value="Genomic_DNA"/>
</dbReference>
<dbReference type="EMBL" id="BC027308">
    <property type="protein sequence ID" value="AAH27308.1"/>
    <property type="molecule type" value="mRNA"/>
</dbReference>
<dbReference type="CCDS" id="CCDS13038.1">
    <molecule id="P18433-5"/>
</dbReference>
<dbReference type="CCDS" id="CCDS13039.1">
    <molecule id="P18433-6"/>
</dbReference>
<dbReference type="PIR" id="A36065">
    <property type="entry name" value="A36065"/>
</dbReference>
<dbReference type="RefSeq" id="NP_001372234.1">
    <molecule id="P18433-5"/>
    <property type="nucleotide sequence ID" value="NM_001385305.1"/>
</dbReference>
<dbReference type="RefSeq" id="NP_001372235.1">
    <molecule id="P18433-5"/>
    <property type="nucleotide sequence ID" value="NM_001385306.1"/>
</dbReference>
<dbReference type="RefSeq" id="NP_001372236.1">
    <molecule id="P18433-5"/>
    <property type="nucleotide sequence ID" value="NM_001385307.1"/>
</dbReference>
<dbReference type="RefSeq" id="NP_001372237.1">
    <molecule id="P18433-5"/>
    <property type="nucleotide sequence ID" value="NM_001385308.1"/>
</dbReference>
<dbReference type="RefSeq" id="NP_001372240.1">
    <molecule id="P18433-6"/>
    <property type="nucleotide sequence ID" value="NM_001385311.1"/>
</dbReference>
<dbReference type="RefSeq" id="NP_001375249.1">
    <molecule id="P18433-5"/>
    <property type="nucleotide sequence ID" value="NM_001388320.1"/>
</dbReference>
<dbReference type="RefSeq" id="NP_001375250.1">
    <molecule id="P18433-6"/>
    <property type="nucleotide sequence ID" value="NM_001388321.1"/>
</dbReference>
<dbReference type="RefSeq" id="NP_002827.1">
    <molecule id="P18433-5"/>
    <property type="nucleotide sequence ID" value="NM_002836.4"/>
</dbReference>
<dbReference type="RefSeq" id="NP_543030.1">
    <molecule id="P18433-6"/>
    <property type="nucleotide sequence ID" value="NM_080840.3"/>
</dbReference>
<dbReference type="RefSeq" id="NP_543031.1">
    <molecule id="P18433-6"/>
    <property type="nucleotide sequence ID" value="NM_080841.3"/>
</dbReference>
<dbReference type="PDB" id="6UZT">
    <property type="method" value="X-ray"/>
    <property type="resolution" value="1.80 A"/>
    <property type="chains" value="A/B=211-802"/>
</dbReference>
<dbReference type="PDBsum" id="6UZT"/>
<dbReference type="SMR" id="P18433"/>
<dbReference type="BioGRID" id="111750">
    <property type="interactions" value="141"/>
</dbReference>
<dbReference type="CORUM" id="P18433"/>
<dbReference type="FunCoup" id="P18433">
    <property type="interactions" value="1081"/>
</dbReference>
<dbReference type="IntAct" id="P18433">
    <property type="interactions" value="89"/>
</dbReference>
<dbReference type="MINT" id="P18433"/>
<dbReference type="STRING" id="9606.ENSP00000369756"/>
<dbReference type="BindingDB" id="P18433"/>
<dbReference type="ChEMBL" id="CHEMBL3918"/>
<dbReference type="DEPOD" id="PTPRA"/>
<dbReference type="GlyCosmos" id="P18433">
    <property type="glycosylation" value="8 sites, 1 glycan"/>
</dbReference>
<dbReference type="GlyGen" id="P18433">
    <property type="glycosylation" value="8 sites, 1 N-linked glycan (1 site), 1 O-linked glycan (1 site)"/>
</dbReference>
<dbReference type="iPTMnet" id="P18433"/>
<dbReference type="PhosphoSitePlus" id="P18433"/>
<dbReference type="BioMuta" id="PTPRA"/>
<dbReference type="DMDM" id="126467"/>
<dbReference type="jPOST" id="P18433"/>
<dbReference type="MassIVE" id="P18433"/>
<dbReference type="PaxDb" id="9606-ENSP00000369756"/>
<dbReference type="PeptideAtlas" id="P18433"/>
<dbReference type="Pumba" id="P18433"/>
<dbReference type="Antibodypedia" id="7130">
    <property type="antibodies" value="507 antibodies from 35 providers"/>
</dbReference>
<dbReference type="DNASU" id="5786"/>
<dbReference type="Ensembl" id="ENST00000216877.10">
    <molecule id="P18433-6"/>
    <property type="protein sequence ID" value="ENSP00000216877.6"/>
    <property type="gene ID" value="ENSG00000132670.21"/>
</dbReference>
<dbReference type="Ensembl" id="ENST00000318266.9">
    <molecule id="P18433-6"/>
    <property type="protein sequence ID" value="ENSP00000314568.5"/>
    <property type="gene ID" value="ENSG00000132670.21"/>
</dbReference>
<dbReference type="Ensembl" id="ENST00000356147.3">
    <molecule id="P18433-6"/>
    <property type="protein sequence ID" value="ENSP00000348468.3"/>
    <property type="gene ID" value="ENSG00000132670.21"/>
</dbReference>
<dbReference type="Ensembl" id="ENST00000399903.7">
    <molecule id="P18433-5"/>
    <property type="protein sequence ID" value="ENSP00000382787.2"/>
    <property type="gene ID" value="ENSG00000132670.21"/>
</dbReference>
<dbReference type="GeneID" id="5786"/>
<dbReference type="KEGG" id="hsa:5786"/>
<dbReference type="MANE-Select" id="ENST00000399903.7">
    <property type="protein sequence ID" value="ENSP00000382787.2"/>
    <property type="RefSeq nucleotide sequence ID" value="NM_001385305.1"/>
    <property type="RefSeq protein sequence ID" value="NP_001372234.1"/>
</dbReference>
<dbReference type="UCSC" id="uc002whj.4">
    <molecule id="P18433-5"/>
    <property type="organism name" value="human"/>
</dbReference>
<dbReference type="AGR" id="HGNC:9664"/>
<dbReference type="CTD" id="5786"/>
<dbReference type="DisGeNET" id="5786"/>
<dbReference type="GeneCards" id="PTPRA"/>
<dbReference type="HGNC" id="HGNC:9664">
    <property type="gene designation" value="PTPRA"/>
</dbReference>
<dbReference type="HPA" id="ENSG00000132670">
    <property type="expression patterns" value="Low tissue specificity"/>
</dbReference>
<dbReference type="MalaCards" id="PTPRA"/>
<dbReference type="MIM" id="176884">
    <property type="type" value="gene"/>
</dbReference>
<dbReference type="neXtProt" id="NX_P18433"/>
<dbReference type="OpenTargets" id="ENSG00000132670"/>
<dbReference type="PharmGKB" id="PA34009"/>
<dbReference type="VEuPathDB" id="HostDB:ENSG00000132670"/>
<dbReference type="eggNOG" id="KOG4228">
    <property type="taxonomic scope" value="Eukaryota"/>
</dbReference>
<dbReference type="GeneTree" id="ENSGT00940000159585"/>
<dbReference type="HOGENOM" id="CLU_001645_8_0_1"/>
<dbReference type="InParanoid" id="P18433"/>
<dbReference type="OMA" id="TESWEGN"/>
<dbReference type="OrthoDB" id="6144703at2759"/>
<dbReference type="PAN-GO" id="P18433">
    <property type="GO annotations" value="2 GO annotations based on evolutionary models"/>
</dbReference>
<dbReference type="PhylomeDB" id="P18433"/>
<dbReference type="TreeFam" id="TF351829"/>
<dbReference type="BRENDA" id="3.1.3.48">
    <property type="organism ID" value="2681"/>
</dbReference>
<dbReference type="PathwayCommons" id="P18433"/>
<dbReference type="Reactome" id="R-HSA-375165">
    <property type="pathway name" value="NCAM signaling for neurite out-growth"/>
</dbReference>
<dbReference type="Reactome" id="R-HSA-5673001">
    <property type="pathway name" value="RAF/MAP kinase cascade"/>
</dbReference>
<dbReference type="SignaLink" id="P18433"/>
<dbReference type="SIGNOR" id="P18433"/>
<dbReference type="BioGRID-ORCS" id="5786">
    <property type="hits" value="13 hits in 1170 CRISPR screens"/>
</dbReference>
<dbReference type="ChiTaRS" id="PTPRA">
    <property type="organism name" value="human"/>
</dbReference>
<dbReference type="GeneWiki" id="PTPRA"/>
<dbReference type="GenomeRNAi" id="5786"/>
<dbReference type="Pharos" id="P18433">
    <property type="development level" value="Tchem"/>
</dbReference>
<dbReference type="PRO" id="PR:P18433"/>
<dbReference type="Proteomes" id="UP000005640">
    <property type="component" value="Chromosome 20"/>
</dbReference>
<dbReference type="RNAct" id="P18433">
    <property type="molecule type" value="protein"/>
</dbReference>
<dbReference type="Bgee" id="ENSG00000132670">
    <property type="expression patterns" value="Expressed in calcaneal tendon and 203 other cell types or tissues"/>
</dbReference>
<dbReference type="ExpressionAtlas" id="P18433">
    <property type="expression patterns" value="baseline and differential"/>
</dbReference>
<dbReference type="GO" id="GO:0070062">
    <property type="term" value="C:extracellular exosome"/>
    <property type="evidence" value="ECO:0007005"/>
    <property type="project" value="UniProtKB"/>
</dbReference>
<dbReference type="GO" id="GO:0005925">
    <property type="term" value="C:focal adhesion"/>
    <property type="evidence" value="ECO:0000250"/>
    <property type="project" value="UniProtKB"/>
</dbReference>
<dbReference type="GO" id="GO:0016020">
    <property type="term" value="C:membrane"/>
    <property type="evidence" value="ECO:0000250"/>
    <property type="project" value="UniProtKB"/>
</dbReference>
<dbReference type="GO" id="GO:0005886">
    <property type="term" value="C:plasma membrane"/>
    <property type="evidence" value="ECO:0000304"/>
    <property type="project" value="Reactome"/>
</dbReference>
<dbReference type="GO" id="GO:0043235">
    <property type="term" value="C:receptor complex"/>
    <property type="evidence" value="ECO:0000314"/>
    <property type="project" value="MGI"/>
</dbReference>
<dbReference type="GO" id="GO:0004725">
    <property type="term" value="F:protein tyrosine phosphatase activity"/>
    <property type="evidence" value="ECO:0000250"/>
    <property type="project" value="UniProtKB"/>
</dbReference>
<dbReference type="GO" id="GO:0005001">
    <property type="term" value="F:transmembrane receptor protein tyrosine phosphatase activity"/>
    <property type="evidence" value="ECO:0000304"/>
    <property type="project" value="ProtInc"/>
</dbReference>
<dbReference type="GO" id="GO:0007229">
    <property type="term" value="P:integrin-mediated signaling pathway"/>
    <property type="evidence" value="ECO:0000250"/>
    <property type="project" value="UniProtKB"/>
</dbReference>
<dbReference type="GO" id="GO:0051893">
    <property type="term" value="P:regulation of focal adhesion assembly"/>
    <property type="evidence" value="ECO:0000250"/>
    <property type="project" value="UniProtKB"/>
</dbReference>
<dbReference type="GO" id="GO:0007165">
    <property type="term" value="P:signal transduction"/>
    <property type="evidence" value="ECO:0000318"/>
    <property type="project" value="GO_Central"/>
</dbReference>
<dbReference type="CDD" id="cd14621">
    <property type="entry name" value="R-PTPc-A-1"/>
    <property type="match status" value="1"/>
</dbReference>
<dbReference type="CDD" id="cd14623">
    <property type="entry name" value="R-PTPc-A-2"/>
    <property type="match status" value="1"/>
</dbReference>
<dbReference type="FunFam" id="3.90.190.10:FF:000007">
    <property type="entry name" value="Receptor-type tyrosine-protein phosphatase alpha"/>
    <property type="match status" value="1"/>
</dbReference>
<dbReference type="FunFam" id="3.90.190.10:FF:000021">
    <property type="entry name" value="Receptor-type tyrosine-protein phosphatase alpha"/>
    <property type="match status" value="1"/>
</dbReference>
<dbReference type="Gene3D" id="3.90.190.10">
    <property type="entry name" value="Protein tyrosine phosphatase superfamily"/>
    <property type="match status" value="2"/>
</dbReference>
<dbReference type="InterPro" id="IPR029021">
    <property type="entry name" value="Prot-tyrosine_phosphatase-like"/>
</dbReference>
<dbReference type="InterPro" id="IPR050348">
    <property type="entry name" value="Protein-Tyr_Phosphatase"/>
</dbReference>
<dbReference type="InterPro" id="IPR000242">
    <property type="entry name" value="PTP_cat"/>
</dbReference>
<dbReference type="InterPro" id="IPR016130">
    <property type="entry name" value="Tyr_Pase_AS"/>
</dbReference>
<dbReference type="InterPro" id="IPR003595">
    <property type="entry name" value="Tyr_Pase_cat"/>
</dbReference>
<dbReference type="InterPro" id="IPR000387">
    <property type="entry name" value="Tyr_Pase_dom"/>
</dbReference>
<dbReference type="InterPro" id="IPR016336">
    <property type="entry name" value="Tyr_Pase_rcpt_a/e-type"/>
</dbReference>
<dbReference type="InterPro" id="IPR027262">
    <property type="entry name" value="Tyr_Pase_rcpt_alpha"/>
</dbReference>
<dbReference type="PANTHER" id="PTHR19134">
    <property type="entry name" value="RECEPTOR-TYPE TYROSINE-PROTEIN PHOSPHATASE"/>
    <property type="match status" value="1"/>
</dbReference>
<dbReference type="PANTHER" id="PTHR19134:SF433">
    <property type="entry name" value="RECEPTOR-TYPE TYROSINE-PROTEIN PHOSPHATASE ALPHA"/>
    <property type="match status" value="1"/>
</dbReference>
<dbReference type="Pfam" id="PF00102">
    <property type="entry name" value="Y_phosphatase"/>
    <property type="match status" value="2"/>
</dbReference>
<dbReference type="PIRSF" id="PIRSF500808">
    <property type="entry name" value="PTPR_alpha"/>
    <property type="match status" value="1"/>
</dbReference>
<dbReference type="PIRSF" id="PIRSF002006">
    <property type="entry name" value="PTPR_alpha_epsilon"/>
    <property type="match status" value="1"/>
</dbReference>
<dbReference type="PRINTS" id="PR00700">
    <property type="entry name" value="PRTYPHPHTASE"/>
</dbReference>
<dbReference type="SMART" id="SM00194">
    <property type="entry name" value="PTPc"/>
    <property type="match status" value="2"/>
</dbReference>
<dbReference type="SMART" id="SM00404">
    <property type="entry name" value="PTPc_motif"/>
    <property type="match status" value="2"/>
</dbReference>
<dbReference type="SUPFAM" id="SSF52799">
    <property type="entry name" value="(Phosphotyrosine protein) phosphatases II"/>
    <property type="match status" value="2"/>
</dbReference>
<dbReference type="PROSITE" id="PS00383">
    <property type="entry name" value="TYR_PHOSPHATASE_1"/>
    <property type="match status" value="2"/>
</dbReference>
<dbReference type="PROSITE" id="PS50056">
    <property type="entry name" value="TYR_PHOSPHATASE_2"/>
    <property type="match status" value="2"/>
</dbReference>
<dbReference type="PROSITE" id="PS50055">
    <property type="entry name" value="TYR_PHOSPHATASE_PTP"/>
    <property type="match status" value="2"/>
</dbReference>
<feature type="signal peptide" evidence="3">
    <location>
        <begin position="1"/>
        <end position="19"/>
    </location>
</feature>
<feature type="chain" id="PRO_0000025433" description="Receptor-type tyrosine-protein phosphatase alpha">
    <location>
        <begin position="20"/>
        <end position="802"/>
    </location>
</feature>
<feature type="topological domain" description="Extracellular" evidence="3">
    <location>
        <begin position="20"/>
        <end position="151"/>
    </location>
</feature>
<feature type="transmembrane region" description="Helical" evidence="3">
    <location>
        <begin position="152"/>
        <end position="174"/>
    </location>
</feature>
<feature type="topological domain" description="Cytoplasmic" evidence="3">
    <location>
        <begin position="175"/>
        <end position="802"/>
    </location>
</feature>
<feature type="domain" description="Tyrosine-protein phosphatase 1" evidence="4">
    <location>
        <begin position="241"/>
        <end position="501"/>
    </location>
</feature>
<feature type="domain" description="Tyrosine-protein phosphatase 2" evidence="4">
    <location>
        <begin position="533"/>
        <end position="791"/>
    </location>
</feature>
<feature type="region of interest" description="Disordered" evidence="6">
    <location>
        <begin position="39"/>
        <end position="59"/>
    </location>
</feature>
<feature type="region of interest" description="Disordered" evidence="6">
    <location>
        <begin position="79"/>
        <end position="146"/>
    </location>
</feature>
<feature type="compositionally biased region" description="Polar residues" evidence="6">
    <location>
        <begin position="79"/>
        <end position="115"/>
    </location>
</feature>
<feature type="compositionally biased region" description="Polar residues" evidence="6">
    <location>
        <begin position="123"/>
        <end position="141"/>
    </location>
</feature>
<feature type="active site" description="Phosphocysteine intermediate" evidence="1">
    <location>
        <position position="442"/>
    </location>
</feature>
<feature type="active site" description="Phosphocysteine intermediate" evidence="1">
    <location>
        <position position="732"/>
    </location>
</feature>
<feature type="binding site" evidence="1">
    <location>
        <position position="410"/>
    </location>
    <ligand>
        <name>substrate</name>
    </ligand>
</feature>
<feature type="binding site" evidence="1">
    <location>
        <begin position="442"/>
        <end position="448"/>
    </location>
    <ligand>
        <name>substrate</name>
    </ligand>
</feature>
<feature type="binding site" evidence="1">
    <location>
        <position position="486"/>
    </location>
    <ligand>
        <name>substrate</name>
    </ligand>
</feature>
<feature type="modified residue" description="Phosphoserine" evidence="2">
    <location>
        <position position="211"/>
    </location>
</feature>
<feature type="modified residue" description="Phosphoserine" evidence="2">
    <location>
        <position position="213"/>
    </location>
</feature>
<feature type="modified residue" description="Phosphotyrosine" evidence="7 9 10 11 12">
    <location>
        <position position="798"/>
    </location>
</feature>
<feature type="glycosylation site" description="N-linked (GlcNAc...) asparagine" evidence="3">
    <location>
        <position position="21"/>
    </location>
</feature>
<feature type="glycosylation site" description="N-linked (GlcNAc...) asparagine" evidence="3">
    <location>
        <position position="36"/>
    </location>
</feature>
<feature type="glycosylation site" description="N-linked (GlcNAc...) asparagine" evidence="3">
    <location>
        <position position="68"/>
    </location>
</feature>
<feature type="glycosylation site" description="N-linked (GlcNAc...) asparagine" evidence="3">
    <location>
        <position position="80"/>
    </location>
</feature>
<feature type="glycosylation site" description="N-linked (GlcNAc...) asparagine" evidence="3">
    <location>
        <position position="86"/>
    </location>
</feature>
<feature type="glycosylation site" description="N-linked (GlcNAc...) asparagine" evidence="3">
    <location>
        <position position="104"/>
    </location>
</feature>
<feature type="glycosylation site" description="N-linked (GlcNAc...) asparagine" evidence="3">
    <location>
        <position position="124"/>
    </location>
</feature>
<feature type="splice variant" id="VSP_059405" description="In isoform 2.">
    <location>
        <begin position="139"/>
        <end position="147"/>
    </location>
</feature>
<feature type="sequence variant" id="VAR_057134" description="In dbSNP:rs1178027.">
    <original>P</original>
    <variation>L</variation>
    <location>
        <position position="109"/>
    </location>
</feature>
<feature type="mutagenesis site" description="Abolishes integrin-mediated interaction with BCAR1 and BCAR3 and reduces interaction between BCAR1 and CRK and, BCAR1 and SRC. Abolishes integrin-induced SRC-mediated tyrosine phosphorylation of BCAR1. Abolishes integrin-mediated recruitment of BCAR1, BCAR3, CRK and PTPRA to focal adhesions. Reduces integrin-mediated activation and membrane recruitment of RAC1 and CDC42." evidence="7">
    <original>Y</original>
    <variation>F</variation>
    <location>
        <position position="798"/>
    </location>
</feature>
<feature type="sequence conflict" description="In Ref. 3; CAA38662." evidence="8" ref="3">
    <original>T</original>
    <variation>M</variation>
    <location>
        <position position="114"/>
    </location>
</feature>
<feature type="sequence conflict" description="In Ref. 4; CAA37447." evidence="8" ref="4">
    <original>E</original>
    <variation>P</variation>
    <location>
        <position position="122"/>
    </location>
</feature>
<feature type="sequence conflict" description="In Ref. 3; CAA38662." evidence="8" ref="3">
    <original>G</original>
    <variation>E</variation>
    <location>
        <position position="289"/>
    </location>
</feature>
<feature type="sequence conflict" description="In Ref. 3; CAA38662." evidence="8" ref="3">
    <original>V</original>
    <variation>A</variation>
    <location>
        <position position="367"/>
    </location>
</feature>
<feature type="sequence conflict" description="In Ref. 3; CAA38662." evidence="8" ref="3">
    <original>F</original>
    <variation>S</variation>
    <location>
        <position position="493"/>
    </location>
</feature>
<feature type="sequence conflict" description="In Ref. 3; CAA38662." evidence="8" ref="3">
    <original>K</original>
    <variation>E</variation>
    <location>
        <position position="786"/>
    </location>
</feature>
<feature type="helix" evidence="13">
    <location>
        <begin position="223"/>
        <end position="225"/>
    </location>
</feature>
<feature type="helix" evidence="13">
    <location>
        <begin position="226"/>
        <end position="246"/>
    </location>
</feature>
<feature type="helix" evidence="13">
    <location>
        <begin position="258"/>
        <end position="261"/>
    </location>
</feature>
<feature type="helix" evidence="13">
    <location>
        <begin position="263"/>
        <end position="268"/>
    </location>
</feature>
<feature type="turn" evidence="13">
    <location>
        <begin position="278"/>
        <end position="280"/>
    </location>
</feature>
<feature type="strand" evidence="13">
    <location>
        <begin position="281"/>
        <end position="283"/>
    </location>
</feature>
<feature type="turn" evidence="13">
    <location>
        <begin position="291"/>
        <end position="294"/>
    </location>
</feature>
<feature type="strand" evidence="13">
    <location>
        <begin position="295"/>
        <end position="301"/>
    </location>
</feature>
<feature type="strand" evidence="13">
    <location>
        <begin position="310"/>
        <end position="313"/>
    </location>
</feature>
<feature type="helix" evidence="13">
    <location>
        <begin position="318"/>
        <end position="320"/>
    </location>
</feature>
<feature type="helix" evidence="13">
    <location>
        <begin position="321"/>
        <end position="330"/>
    </location>
</feature>
<feature type="strand" evidence="13">
    <location>
        <begin position="335"/>
        <end position="338"/>
    </location>
</feature>
<feature type="strand" evidence="13">
    <location>
        <begin position="342"/>
        <end position="344"/>
    </location>
</feature>
<feature type="strand" evidence="13">
    <location>
        <begin position="356"/>
        <end position="362"/>
    </location>
</feature>
<feature type="strand" evidence="13">
    <location>
        <begin position="365"/>
        <end position="374"/>
    </location>
</feature>
<feature type="strand" evidence="13">
    <location>
        <begin position="376"/>
        <end position="387"/>
    </location>
</feature>
<feature type="strand" evidence="13">
    <location>
        <begin position="398"/>
        <end position="405"/>
    </location>
</feature>
<feature type="strand" evidence="13">
    <location>
        <begin position="410"/>
        <end position="412"/>
    </location>
</feature>
<feature type="helix" evidence="13">
    <location>
        <begin position="418"/>
        <end position="430"/>
    </location>
</feature>
<feature type="strand" evidence="13">
    <location>
        <begin position="438"/>
        <end position="441"/>
    </location>
</feature>
<feature type="strand" evidence="13">
    <location>
        <begin position="443"/>
        <end position="446"/>
    </location>
</feature>
<feature type="helix" evidence="13">
    <location>
        <begin position="447"/>
        <end position="465"/>
    </location>
</feature>
<feature type="strand" evidence="13">
    <location>
        <begin position="466"/>
        <end position="468"/>
    </location>
</feature>
<feature type="helix" evidence="13">
    <location>
        <begin position="470"/>
        <end position="477"/>
    </location>
</feature>
<feature type="turn" evidence="13">
    <location>
        <begin position="478"/>
        <end position="480"/>
    </location>
</feature>
<feature type="helix" evidence="13">
    <location>
        <begin position="488"/>
        <end position="504"/>
    </location>
</feature>
<feature type="helix" evidence="13">
    <location>
        <begin position="511"/>
        <end position="513"/>
    </location>
</feature>
<feature type="helix" evidence="13">
    <location>
        <begin position="514"/>
        <end position="522"/>
    </location>
</feature>
<feature type="strand" evidence="13">
    <location>
        <begin position="528"/>
        <end position="531"/>
    </location>
</feature>
<feature type="helix" evidence="13">
    <location>
        <begin position="532"/>
        <end position="541"/>
    </location>
</feature>
<feature type="helix" evidence="13">
    <location>
        <begin position="547"/>
        <end position="549"/>
    </location>
</feature>
<feature type="helix" evidence="13">
    <location>
        <begin position="552"/>
        <end position="554"/>
    </location>
</feature>
<feature type="turn" evidence="13">
    <location>
        <begin position="556"/>
        <end position="558"/>
    </location>
</feature>
<feature type="helix" evidence="13">
    <location>
        <begin position="559"/>
        <end position="561"/>
    </location>
</feature>
<feature type="helix" evidence="13">
    <location>
        <begin position="571"/>
        <end position="573"/>
    </location>
</feature>
<feature type="strand" evidence="13">
    <location>
        <begin position="574"/>
        <end position="576"/>
    </location>
</feature>
<feature type="turn" evidence="13">
    <location>
        <begin position="584"/>
        <end position="587"/>
    </location>
</feature>
<feature type="strand" evidence="13">
    <location>
        <begin position="588"/>
        <end position="594"/>
    </location>
</feature>
<feature type="strand" evidence="13">
    <location>
        <begin position="597"/>
        <end position="599"/>
    </location>
</feature>
<feature type="strand" evidence="13">
    <location>
        <begin position="603"/>
        <end position="606"/>
    </location>
</feature>
<feature type="helix" evidence="13">
    <location>
        <begin position="611"/>
        <end position="613"/>
    </location>
</feature>
<feature type="helix" evidence="13">
    <location>
        <begin position="614"/>
        <end position="623"/>
    </location>
</feature>
<feature type="strand" evidence="13">
    <location>
        <begin position="628"/>
        <end position="631"/>
    </location>
</feature>
<feature type="strand" evidence="13">
    <location>
        <begin position="635"/>
        <end position="637"/>
    </location>
</feature>
<feature type="strand" evidence="13">
    <location>
        <begin position="649"/>
        <end position="655"/>
    </location>
</feature>
<feature type="strand" evidence="13">
    <location>
        <begin position="658"/>
        <end position="667"/>
    </location>
</feature>
<feature type="strand" evidence="13">
    <location>
        <begin position="669"/>
        <end position="680"/>
    </location>
</feature>
<feature type="turn" evidence="13">
    <location>
        <begin position="681"/>
        <end position="684"/>
    </location>
</feature>
<feature type="strand" evidence="13">
    <location>
        <begin position="685"/>
        <end position="694"/>
    </location>
</feature>
<feature type="strand" evidence="13">
    <location>
        <begin position="699"/>
        <end position="701"/>
    </location>
</feature>
<feature type="helix" evidence="13">
    <location>
        <begin position="707"/>
        <end position="722"/>
    </location>
</feature>
<feature type="strand" evidence="13">
    <location>
        <begin position="728"/>
        <end position="731"/>
    </location>
</feature>
<feature type="strand" evidence="13">
    <location>
        <begin position="733"/>
        <end position="736"/>
    </location>
</feature>
<feature type="helix" evidence="13">
    <location>
        <begin position="737"/>
        <end position="755"/>
    </location>
</feature>
<feature type="strand" evidence="13">
    <location>
        <begin position="756"/>
        <end position="758"/>
    </location>
</feature>
<feature type="helix" evidence="13">
    <location>
        <begin position="760"/>
        <end position="770"/>
    </location>
</feature>
<feature type="helix" evidence="13">
    <location>
        <begin position="778"/>
        <end position="794"/>
    </location>
</feature>
<feature type="turn" evidence="13">
    <location>
        <begin position="795"/>
        <end position="797"/>
    </location>
</feature>
<organism>
    <name type="scientific">Homo sapiens</name>
    <name type="common">Human</name>
    <dbReference type="NCBI Taxonomy" id="9606"/>
    <lineage>
        <taxon>Eukaryota</taxon>
        <taxon>Metazoa</taxon>
        <taxon>Chordata</taxon>
        <taxon>Craniata</taxon>
        <taxon>Vertebrata</taxon>
        <taxon>Euteleostomi</taxon>
        <taxon>Mammalia</taxon>
        <taxon>Eutheria</taxon>
        <taxon>Euarchontoglires</taxon>
        <taxon>Primates</taxon>
        <taxon>Haplorrhini</taxon>
        <taxon>Catarrhini</taxon>
        <taxon>Hominidae</taxon>
        <taxon>Homo</taxon>
    </lineage>
</organism>
<evidence type="ECO:0000250" key="1"/>
<evidence type="ECO:0000250" key="2">
    <source>
        <dbReference type="UniProtKB" id="P18052"/>
    </source>
</evidence>
<evidence type="ECO:0000255" key="3"/>
<evidence type="ECO:0000255" key="4">
    <source>
        <dbReference type="PROSITE-ProRule" id="PRU00160"/>
    </source>
</evidence>
<evidence type="ECO:0000255" key="5">
    <source>
        <dbReference type="PROSITE-ProRule" id="PRU10044"/>
    </source>
</evidence>
<evidence type="ECO:0000256" key="6">
    <source>
        <dbReference type="SAM" id="MobiDB-lite"/>
    </source>
</evidence>
<evidence type="ECO:0000269" key="7">
    <source>
    </source>
</evidence>
<evidence type="ECO:0000305" key="8"/>
<evidence type="ECO:0007744" key="9">
    <source>
    </source>
</evidence>
<evidence type="ECO:0007744" key="10">
    <source>
    </source>
</evidence>
<evidence type="ECO:0007744" key="11">
    <source>
    </source>
</evidence>
<evidence type="ECO:0007744" key="12">
    <source>
    </source>
</evidence>
<evidence type="ECO:0007829" key="13">
    <source>
        <dbReference type="PDB" id="6UZT"/>
    </source>
</evidence>
<keyword id="KW-0002">3D-structure</keyword>
<keyword id="KW-0025">Alternative splicing</keyword>
<keyword id="KW-0965">Cell junction</keyword>
<keyword id="KW-1003">Cell membrane</keyword>
<keyword id="KW-0325">Glycoprotein</keyword>
<keyword id="KW-0378">Hydrolase</keyword>
<keyword id="KW-0472">Membrane</keyword>
<keyword id="KW-0597">Phosphoprotein</keyword>
<keyword id="KW-0904">Protein phosphatase</keyword>
<keyword id="KW-1267">Proteomics identification</keyword>
<keyword id="KW-1185">Reference proteome</keyword>
<keyword id="KW-0677">Repeat</keyword>
<keyword id="KW-0732">Signal</keyword>
<keyword id="KW-0812">Transmembrane</keyword>
<keyword id="KW-1133">Transmembrane helix</keyword>
<comment type="function">
    <text evidence="2">Tyrosine protein phosphatase which is involved in integrin-mediated focal adhesion formation (By similarity). Following integrin engagement, specifically recruits BCAR3, BCAR1 and CRK to focal adhesions thereby promoting SRC-mediated phosphorylation of BRAC1 and the subsequent activation of PAK and small GTPase RAC1 and CDC42 (By similarity).</text>
</comment>
<comment type="catalytic activity">
    <reaction evidence="5">
        <text>O-phospho-L-tyrosyl-[protein] + H2O = L-tyrosyl-[protein] + phosphate</text>
        <dbReference type="Rhea" id="RHEA:10684"/>
        <dbReference type="Rhea" id="RHEA-COMP:10136"/>
        <dbReference type="Rhea" id="RHEA-COMP:20101"/>
        <dbReference type="ChEBI" id="CHEBI:15377"/>
        <dbReference type="ChEBI" id="CHEBI:43474"/>
        <dbReference type="ChEBI" id="CHEBI:46858"/>
        <dbReference type="ChEBI" id="CHEBI:61978"/>
        <dbReference type="EC" id="3.1.3.48"/>
    </reaction>
</comment>
<comment type="subunit">
    <text evidence="7">Part of a complex comprised of PTPRA, BCAR1, BCAR3 (via SH2 domain), and SRC (PubMed:22801373). Within the complex, interacts (when phosphorylated on Tyr-798) with BCAR3 (via SH2 domain) (PubMed:22801373). Interacts with GRB2 (PubMed:22801373).</text>
</comment>
<comment type="interaction">
    <interactant intactId="EBI-2609645">
        <id>P18433</id>
    </interactant>
    <interactant intactId="EBI-297353">
        <id>P00533</id>
        <label>EGFR</label>
    </interactant>
    <organismsDiffer>false</organismsDiffer>
    <experiments>3</experiments>
</comment>
<comment type="interaction">
    <interactant intactId="EBI-2609645">
        <id>P18433</id>
    </interactant>
    <interactant intactId="EBI-401755">
        <id>P62993</id>
        <label>GRB2</label>
    </interactant>
    <organismsDiffer>false</organismsDiffer>
    <experiments>16</experiments>
</comment>
<comment type="interaction">
    <interactant intactId="EBI-2609645">
        <id>P18433</id>
    </interactant>
    <interactant intactId="EBI-621482">
        <id>P12931</id>
        <label>SRC</label>
    </interactant>
    <organismsDiffer>false</organismsDiffer>
    <experiments>5</experiments>
</comment>
<comment type="interaction">
    <interactant intactId="EBI-2609645">
        <id>P18433</id>
    </interactant>
    <interactant intactId="EBI-524514">
        <id>P39688</id>
        <label>Fyn</label>
    </interactant>
    <organismsDiffer>true</organismsDiffer>
    <experiments>2</experiments>
</comment>
<comment type="interaction">
    <interactant intactId="EBI-2609645">
        <id>P18433</id>
    </interactant>
    <interactant intactId="EBI-848039">
        <id>P00523</id>
        <label>SRC</label>
    </interactant>
    <organismsDiffer>true</organismsDiffer>
    <experiments>4</experiments>
</comment>
<comment type="subcellular location">
    <subcellularLocation>
        <location evidence="3">Cell membrane</location>
        <topology evidence="3">Single-pass type I membrane protein</topology>
    </subcellularLocation>
    <subcellularLocation>
        <location evidence="2">Cell junction</location>
        <location evidence="2">Focal adhesion</location>
    </subcellularLocation>
    <text evidence="2">Localizes to focal adhesion sites following integrin engagement.</text>
</comment>
<comment type="alternative products">
    <event type="alternative splicing"/>
    <isoform>
        <id>P18433-5</id>
        <name>1</name>
        <sequence type="displayed"/>
    </isoform>
    <isoform>
        <id>P18433-6</id>
        <name>2</name>
        <sequence type="described" ref="VSP_059405"/>
    </isoform>
</comment>
<comment type="PTM">
    <text evidence="7">Integrin binding to extracellular matrix induces phosphorylation at Tyr-798 which induces PTPRA localization and recruitment of BCAR3, BCAR1 and CRK to focal adhesions.</text>
</comment>
<comment type="similarity">
    <text evidence="8">Belongs to the protein-tyrosine phosphatase family. Receptor class 4 subfamily.</text>
</comment>
<proteinExistence type="evidence at protein level"/>
<gene>
    <name type="primary">PTPRA</name>
    <name type="synonym">PTPA</name>
    <name type="synonym">PTPRL2</name>
</gene>
<name>PTPRA_HUMAN</name>